<proteinExistence type="inferred from homology"/>
<keyword id="KW-0963">Cytoplasm</keyword>
<keyword id="KW-0690">Ribosome biogenesis</keyword>
<sequence>MTKVTELVADVVTPLAEARGDELVDVEYVKEKKQYYLRIYVDRRPGGIDIEEIANLSELVSEKLDELDPDPFPEPYILELSSPGLERPIKNEKDWERAKGSYIHVSLYQKIDGEKTYEGTLKDLNQNQIVLEVKIKTRRKEITIPRKVIASSRFAVEF</sequence>
<name>RIMP_LACGA</name>
<dbReference type="EMBL" id="CP000413">
    <property type="protein sequence ID" value="ABJ60201.1"/>
    <property type="status" value="ALT_INIT"/>
    <property type="molecule type" value="Genomic_DNA"/>
</dbReference>
<dbReference type="RefSeq" id="WP_003647482.1">
    <property type="nucleotide sequence ID" value="NZ_WBMG01000005.1"/>
</dbReference>
<dbReference type="SMR" id="Q044C1"/>
<dbReference type="GeneID" id="29639403"/>
<dbReference type="KEGG" id="lga:LGAS_0810"/>
<dbReference type="HOGENOM" id="CLU_070525_2_0_9"/>
<dbReference type="BioCyc" id="LGAS324831:G1G6Y-804-MONOMER"/>
<dbReference type="Proteomes" id="UP000000664">
    <property type="component" value="Chromosome"/>
</dbReference>
<dbReference type="GO" id="GO:0005829">
    <property type="term" value="C:cytosol"/>
    <property type="evidence" value="ECO:0007669"/>
    <property type="project" value="TreeGrafter"/>
</dbReference>
<dbReference type="GO" id="GO:0000028">
    <property type="term" value="P:ribosomal small subunit assembly"/>
    <property type="evidence" value="ECO:0007669"/>
    <property type="project" value="TreeGrafter"/>
</dbReference>
<dbReference type="GO" id="GO:0006412">
    <property type="term" value="P:translation"/>
    <property type="evidence" value="ECO:0007669"/>
    <property type="project" value="TreeGrafter"/>
</dbReference>
<dbReference type="CDD" id="cd01734">
    <property type="entry name" value="YlxS_C"/>
    <property type="match status" value="1"/>
</dbReference>
<dbReference type="FunFam" id="3.30.300.70:FF:000001">
    <property type="entry name" value="Ribosome maturation factor RimP"/>
    <property type="match status" value="1"/>
</dbReference>
<dbReference type="Gene3D" id="2.30.30.180">
    <property type="entry name" value="Ribosome maturation factor RimP, C-terminal domain"/>
    <property type="match status" value="1"/>
</dbReference>
<dbReference type="Gene3D" id="3.30.300.70">
    <property type="entry name" value="RimP-like superfamily, N-terminal"/>
    <property type="match status" value="1"/>
</dbReference>
<dbReference type="HAMAP" id="MF_01077">
    <property type="entry name" value="RimP"/>
    <property type="match status" value="1"/>
</dbReference>
<dbReference type="InterPro" id="IPR003728">
    <property type="entry name" value="Ribosome_maturation_RimP"/>
</dbReference>
<dbReference type="InterPro" id="IPR028998">
    <property type="entry name" value="RimP_C"/>
</dbReference>
<dbReference type="InterPro" id="IPR036847">
    <property type="entry name" value="RimP_C_sf"/>
</dbReference>
<dbReference type="InterPro" id="IPR028989">
    <property type="entry name" value="RimP_N"/>
</dbReference>
<dbReference type="InterPro" id="IPR035956">
    <property type="entry name" value="RimP_N_sf"/>
</dbReference>
<dbReference type="NCBIfam" id="NF000928">
    <property type="entry name" value="PRK00092.1-2"/>
    <property type="match status" value="1"/>
</dbReference>
<dbReference type="PANTHER" id="PTHR33867">
    <property type="entry name" value="RIBOSOME MATURATION FACTOR RIMP"/>
    <property type="match status" value="1"/>
</dbReference>
<dbReference type="PANTHER" id="PTHR33867:SF1">
    <property type="entry name" value="RIBOSOME MATURATION FACTOR RIMP"/>
    <property type="match status" value="1"/>
</dbReference>
<dbReference type="Pfam" id="PF17384">
    <property type="entry name" value="DUF150_C"/>
    <property type="match status" value="1"/>
</dbReference>
<dbReference type="Pfam" id="PF02576">
    <property type="entry name" value="RimP_N"/>
    <property type="match status" value="1"/>
</dbReference>
<dbReference type="SUPFAM" id="SSF74942">
    <property type="entry name" value="YhbC-like, C-terminal domain"/>
    <property type="match status" value="1"/>
</dbReference>
<dbReference type="SUPFAM" id="SSF75420">
    <property type="entry name" value="YhbC-like, N-terminal domain"/>
    <property type="match status" value="1"/>
</dbReference>
<feature type="chain" id="PRO_0000384693" description="Ribosome maturation factor RimP">
    <location>
        <begin position="1"/>
        <end position="158"/>
    </location>
</feature>
<protein>
    <recommendedName>
        <fullName evidence="1">Ribosome maturation factor RimP</fullName>
    </recommendedName>
</protein>
<comment type="function">
    <text evidence="1">Required for maturation of 30S ribosomal subunits.</text>
</comment>
<comment type="subcellular location">
    <subcellularLocation>
        <location evidence="1">Cytoplasm</location>
    </subcellularLocation>
</comment>
<comment type="similarity">
    <text evidence="1">Belongs to the RimP family.</text>
</comment>
<comment type="sequence caution" evidence="2">
    <conflict type="erroneous initiation">
        <sequence resource="EMBL-CDS" id="ABJ60201"/>
    </conflict>
</comment>
<reference key="1">
    <citation type="journal article" date="2006" name="Proc. Natl. Acad. Sci. U.S.A.">
        <title>Comparative genomics of the lactic acid bacteria.</title>
        <authorList>
            <person name="Makarova K.S."/>
            <person name="Slesarev A."/>
            <person name="Wolf Y.I."/>
            <person name="Sorokin A."/>
            <person name="Mirkin B."/>
            <person name="Koonin E.V."/>
            <person name="Pavlov A."/>
            <person name="Pavlova N."/>
            <person name="Karamychev V."/>
            <person name="Polouchine N."/>
            <person name="Shakhova V."/>
            <person name="Grigoriev I."/>
            <person name="Lou Y."/>
            <person name="Rohksar D."/>
            <person name="Lucas S."/>
            <person name="Huang K."/>
            <person name="Goodstein D.M."/>
            <person name="Hawkins T."/>
            <person name="Plengvidhya V."/>
            <person name="Welker D."/>
            <person name="Hughes J."/>
            <person name="Goh Y."/>
            <person name="Benson A."/>
            <person name="Baldwin K."/>
            <person name="Lee J.-H."/>
            <person name="Diaz-Muniz I."/>
            <person name="Dosti B."/>
            <person name="Smeianov V."/>
            <person name="Wechter W."/>
            <person name="Barabote R."/>
            <person name="Lorca G."/>
            <person name="Altermann E."/>
            <person name="Barrangou R."/>
            <person name="Ganesan B."/>
            <person name="Xie Y."/>
            <person name="Rawsthorne H."/>
            <person name="Tamir D."/>
            <person name="Parker C."/>
            <person name="Breidt F."/>
            <person name="Broadbent J.R."/>
            <person name="Hutkins R."/>
            <person name="O'Sullivan D."/>
            <person name="Steele J."/>
            <person name="Unlu G."/>
            <person name="Saier M.H. Jr."/>
            <person name="Klaenhammer T."/>
            <person name="Richardson P."/>
            <person name="Kozyavkin S."/>
            <person name="Weimer B.C."/>
            <person name="Mills D.A."/>
        </authorList>
    </citation>
    <scope>NUCLEOTIDE SEQUENCE [LARGE SCALE GENOMIC DNA]</scope>
    <source>
        <strain>ATCC 33323 / DSM 20243 / BCRC 14619 / CIP 102991 / JCM 1131 / KCTC 3163 / NCIMB 11718 / NCTC 13722 / AM63</strain>
    </source>
</reference>
<evidence type="ECO:0000255" key="1">
    <source>
        <dbReference type="HAMAP-Rule" id="MF_01077"/>
    </source>
</evidence>
<evidence type="ECO:0000305" key="2"/>
<organism>
    <name type="scientific">Lactobacillus gasseri (strain ATCC 33323 / DSM 20243 / BCRC 14619 / CIP 102991 / JCM 1131 / KCTC 3163 / NCIMB 11718 / NCTC 13722 / AM63)</name>
    <dbReference type="NCBI Taxonomy" id="324831"/>
    <lineage>
        <taxon>Bacteria</taxon>
        <taxon>Bacillati</taxon>
        <taxon>Bacillota</taxon>
        <taxon>Bacilli</taxon>
        <taxon>Lactobacillales</taxon>
        <taxon>Lactobacillaceae</taxon>
        <taxon>Lactobacillus</taxon>
    </lineage>
</organism>
<accession>Q044C1</accession>
<gene>
    <name evidence="1" type="primary">rimP</name>
    <name type="ordered locus">LGAS_0810</name>
</gene>